<dbReference type="EC" id="2.7.11.25"/>
<dbReference type="EMBL" id="U78876">
    <property type="protein sequence ID" value="AAB41729.1"/>
    <property type="molecule type" value="mRNA"/>
</dbReference>
<dbReference type="EMBL" id="AK315305">
    <property type="protein sequence ID" value="BAG37709.1"/>
    <property type="molecule type" value="mRNA"/>
</dbReference>
<dbReference type="EMBL" id="AL834303">
    <property type="protein sequence ID" value="CAD38973.1"/>
    <property type="molecule type" value="mRNA"/>
</dbReference>
<dbReference type="EMBL" id="AC046185">
    <property type="status" value="NOT_ANNOTATED_CDS"/>
    <property type="molecule type" value="Genomic_DNA"/>
</dbReference>
<dbReference type="EMBL" id="CH471109">
    <property type="protein sequence ID" value="EAW94297.1"/>
    <property type="molecule type" value="Genomic_DNA"/>
</dbReference>
<dbReference type="EMBL" id="CH471109">
    <property type="protein sequence ID" value="EAW94298.1"/>
    <property type="molecule type" value="Genomic_DNA"/>
</dbReference>
<dbReference type="EMBL" id="CH471109">
    <property type="protein sequence ID" value="EAW94299.1"/>
    <property type="molecule type" value="Genomic_DNA"/>
</dbReference>
<dbReference type="EMBL" id="BC090859">
    <property type="protein sequence ID" value="AAH90859.1"/>
    <property type="molecule type" value="mRNA"/>
</dbReference>
<dbReference type="EMBL" id="BC093672">
    <property type="protein sequence ID" value="AAH93672.1"/>
    <property type="molecule type" value="mRNA"/>
</dbReference>
<dbReference type="EMBL" id="BC093674">
    <property type="protein sequence ID" value="AAH93674.1"/>
    <property type="molecule type" value="mRNA"/>
</dbReference>
<dbReference type="CCDS" id="CCDS32701.1">
    <molecule id="Q99759-2"/>
</dbReference>
<dbReference type="CCDS" id="CCDS32702.1">
    <molecule id="Q99759-1"/>
</dbReference>
<dbReference type="RefSeq" id="NP_002392.2">
    <molecule id="Q99759-1"/>
    <property type="nucleotide sequence ID" value="NM_002401.3"/>
</dbReference>
<dbReference type="RefSeq" id="NP_976226.1">
    <molecule id="Q99759-2"/>
    <property type="nucleotide sequence ID" value="NM_203351.3"/>
</dbReference>
<dbReference type="PDB" id="2C60">
    <property type="method" value="X-ray"/>
    <property type="resolution" value="1.25 A"/>
    <property type="chains" value="A=37-124"/>
</dbReference>
<dbReference type="PDB" id="2JRH">
    <property type="method" value="NMR"/>
    <property type="chains" value="A=42-126"/>
</dbReference>
<dbReference type="PDB" id="2O2V">
    <property type="method" value="X-ray"/>
    <property type="resolution" value="1.83 A"/>
    <property type="chains" value="B=37-124"/>
</dbReference>
<dbReference type="PDB" id="2PPH">
    <property type="method" value="NMR"/>
    <property type="chains" value="A=42-126"/>
</dbReference>
<dbReference type="PDB" id="4Y5O">
    <property type="method" value="X-ray"/>
    <property type="resolution" value="2.35 A"/>
    <property type="chains" value="B=1-124"/>
</dbReference>
<dbReference type="PDB" id="4YL6">
    <property type="method" value="X-ray"/>
    <property type="resolution" value="2.10 A"/>
    <property type="chains" value="B=1-22"/>
</dbReference>
<dbReference type="PDBsum" id="2C60"/>
<dbReference type="PDBsum" id="2JRH"/>
<dbReference type="PDBsum" id="2O2V"/>
<dbReference type="PDBsum" id="2PPH"/>
<dbReference type="PDBsum" id="4Y5O"/>
<dbReference type="PDBsum" id="4YL6"/>
<dbReference type="BMRB" id="Q99759"/>
<dbReference type="SMR" id="Q99759"/>
<dbReference type="BioGRID" id="110379">
    <property type="interactions" value="80"/>
</dbReference>
<dbReference type="CORUM" id="Q99759"/>
<dbReference type="DIP" id="DIP-27521N"/>
<dbReference type="FunCoup" id="Q99759">
    <property type="interactions" value="2004"/>
</dbReference>
<dbReference type="IntAct" id="Q99759">
    <property type="interactions" value="40"/>
</dbReference>
<dbReference type="MINT" id="Q99759"/>
<dbReference type="STRING" id="9606.ENSP00000354927"/>
<dbReference type="BindingDB" id="Q99759"/>
<dbReference type="ChEMBL" id="CHEMBL5970"/>
<dbReference type="DrugBank" id="DB12010">
    <property type="generic name" value="Fostamatinib"/>
</dbReference>
<dbReference type="DrugCentral" id="Q99759"/>
<dbReference type="iPTMnet" id="Q99759"/>
<dbReference type="PhosphoSitePlus" id="Q99759"/>
<dbReference type="BioMuta" id="MAP3K3"/>
<dbReference type="DMDM" id="160332306"/>
<dbReference type="CPTAC" id="CPTAC-2992"/>
<dbReference type="CPTAC" id="CPTAC-2993"/>
<dbReference type="CPTAC" id="CPTAC-845"/>
<dbReference type="CPTAC" id="CPTAC-846"/>
<dbReference type="jPOST" id="Q99759"/>
<dbReference type="MassIVE" id="Q99759"/>
<dbReference type="PaxDb" id="9606-ENSP00000354927"/>
<dbReference type="PeptideAtlas" id="Q99759"/>
<dbReference type="ProteomicsDB" id="78464">
    <molecule id="Q99759-1"/>
</dbReference>
<dbReference type="ProteomicsDB" id="78465">
    <molecule id="Q99759-2"/>
</dbReference>
<dbReference type="Pumba" id="Q99759"/>
<dbReference type="Antibodypedia" id="31306">
    <property type="antibodies" value="244 antibodies from 39 providers"/>
</dbReference>
<dbReference type="DNASU" id="4215"/>
<dbReference type="Ensembl" id="ENST00000361357.7">
    <molecule id="Q99759-2"/>
    <property type="protein sequence ID" value="ENSP00000354927.3"/>
    <property type="gene ID" value="ENSG00000198909.8"/>
</dbReference>
<dbReference type="Ensembl" id="ENST00000361733.8">
    <molecule id="Q99759-1"/>
    <property type="protein sequence ID" value="ENSP00000354485.4"/>
    <property type="gene ID" value="ENSG00000198909.8"/>
</dbReference>
<dbReference type="Ensembl" id="ENST00000579585.5">
    <molecule id="Q99759-2"/>
    <property type="protein sequence ID" value="ENSP00000461988.1"/>
    <property type="gene ID" value="ENSG00000198909.8"/>
</dbReference>
<dbReference type="GeneID" id="4215"/>
<dbReference type="KEGG" id="hsa:4215"/>
<dbReference type="MANE-Select" id="ENST00000361733.8">
    <property type="protein sequence ID" value="ENSP00000354485.4"/>
    <property type="RefSeq nucleotide sequence ID" value="NM_002401.5"/>
    <property type="RefSeq protein sequence ID" value="NP_002392.2"/>
</dbReference>
<dbReference type="UCSC" id="uc002jbe.4">
    <molecule id="Q99759-1"/>
    <property type="organism name" value="human"/>
</dbReference>
<dbReference type="AGR" id="HGNC:6855"/>
<dbReference type="CTD" id="4215"/>
<dbReference type="DisGeNET" id="4215"/>
<dbReference type="GeneCards" id="MAP3K3"/>
<dbReference type="HGNC" id="HGNC:6855">
    <property type="gene designation" value="MAP3K3"/>
</dbReference>
<dbReference type="HPA" id="ENSG00000198909">
    <property type="expression patterns" value="Low tissue specificity"/>
</dbReference>
<dbReference type="MalaCards" id="MAP3K3"/>
<dbReference type="MIM" id="602539">
    <property type="type" value="gene"/>
</dbReference>
<dbReference type="MIM" id="621032">
    <property type="type" value="phenotype"/>
</dbReference>
<dbReference type="neXtProt" id="NX_Q99759"/>
<dbReference type="OpenTargets" id="ENSG00000198909"/>
<dbReference type="PharmGKB" id="PA30599"/>
<dbReference type="VEuPathDB" id="HostDB:ENSG00000198909"/>
<dbReference type="eggNOG" id="KOG0198">
    <property type="taxonomic scope" value="Eukaryota"/>
</dbReference>
<dbReference type="GeneTree" id="ENSGT00940000158767"/>
<dbReference type="InParanoid" id="Q99759"/>
<dbReference type="OMA" id="SQDRNHQ"/>
<dbReference type="OrthoDB" id="8693905at2759"/>
<dbReference type="PAN-GO" id="Q99759">
    <property type="GO annotations" value="2 GO annotations based on evolutionary models"/>
</dbReference>
<dbReference type="PhylomeDB" id="Q99759"/>
<dbReference type="TreeFam" id="TF105113"/>
<dbReference type="BRENDA" id="2.7.11.25">
    <property type="organism ID" value="2681"/>
</dbReference>
<dbReference type="BRENDA" id="2.7.12.2">
    <property type="organism ID" value="2681"/>
</dbReference>
<dbReference type="PathwayCommons" id="Q99759"/>
<dbReference type="Reactome" id="R-HSA-9020702">
    <property type="pathway name" value="Interleukin-1 signaling"/>
</dbReference>
<dbReference type="SignaLink" id="Q99759"/>
<dbReference type="SIGNOR" id="Q99759"/>
<dbReference type="BioGRID-ORCS" id="4215">
    <property type="hits" value="15 hits in 1190 CRISPR screens"/>
</dbReference>
<dbReference type="ChiTaRS" id="MAP3K3">
    <property type="organism name" value="human"/>
</dbReference>
<dbReference type="EvolutionaryTrace" id="Q99759"/>
<dbReference type="GeneWiki" id="MAP3K3"/>
<dbReference type="GenomeRNAi" id="4215"/>
<dbReference type="Pharos" id="Q99759">
    <property type="development level" value="Tchem"/>
</dbReference>
<dbReference type="PRO" id="PR:Q99759"/>
<dbReference type="Proteomes" id="UP000005640">
    <property type="component" value="Chromosome 17"/>
</dbReference>
<dbReference type="RNAct" id="Q99759">
    <property type="molecule type" value="protein"/>
</dbReference>
<dbReference type="Bgee" id="ENSG00000198909">
    <property type="expression patterns" value="Expressed in monocyte and 179 other cell types or tissues"/>
</dbReference>
<dbReference type="ExpressionAtlas" id="Q99759">
    <property type="expression patterns" value="baseline and differential"/>
</dbReference>
<dbReference type="GO" id="GO:0005737">
    <property type="term" value="C:cytoplasm"/>
    <property type="evidence" value="ECO:0000318"/>
    <property type="project" value="GO_Central"/>
</dbReference>
<dbReference type="GO" id="GO:0005829">
    <property type="term" value="C:cytosol"/>
    <property type="evidence" value="ECO:0000304"/>
    <property type="project" value="Reactome"/>
</dbReference>
<dbReference type="GO" id="GO:0005524">
    <property type="term" value="F:ATP binding"/>
    <property type="evidence" value="ECO:0007669"/>
    <property type="project" value="UniProtKB-KW"/>
</dbReference>
<dbReference type="GO" id="GO:0004709">
    <property type="term" value="F:MAP kinase kinase kinase activity"/>
    <property type="evidence" value="ECO:0000304"/>
    <property type="project" value="ProtInc"/>
</dbReference>
<dbReference type="GO" id="GO:0046872">
    <property type="term" value="F:metal ion binding"/>
    <property type="evidence" value="ECO:0007669"/>
    <property type="project" value="UniProtKB-KW"/>
</dbReference>
<dbReference type="GO" id="GO:0004672">
    <property type="term" value="F:protein kinase activity"/>
    <property type="evidence" value="ECO:0000314"/>
    <property type="project" value="MGI"/>
</dbReference>
<dbReference type="GO" id="GO:0106310">
    <property type="term" value="F:protein serine kinase activity"/>
    <property type="evidence" value="ECO:0007669"/>
    <property type="project" value="RHEA"/>
</dbReference>
<dbReference type="GO" id="GO:0004674">
    <property type="term" value="F:protein serine/threonine kinase activity"/>
    <property type="evidence" value="ECO:0000318"/>
    <property type="project" value="GO_Central"/>
</dbReference>
<dbReference type="GO" id="GO:0001568">
    <property type="term" value="P:blood vessel development"/>
    <property type="evidence" value="ECO:0007669"/>
    <property type="project" value="Ensembl"/>
</dbReference>
<dbReference type="GO" id="GO:0035556">
    <property type="term" value="P:intracellular signal transduction"/>
    <property type="evidence" value="ECO:0000314"/>
    <property type="project" value="MGI"/>
</dbReference>
<dbReference type="GO" id="GO:0000165">
    <property type="term" value="P:MAPK cascade"/>
    <property type="evidence" value="ECO:0000304"/>
    <property type="project" value="ProtInc"/>
</dbReference>
<dbReference type="GO" id="GO:0043123">
    <property type="term" value="P:positive regulation of canonical NF-kappaB signal transduction"/>
    <property type="evidence" value="ECO:0000270"/>
    <property type="project" value="UniProtKB"/>
</dbReference>
<dbReference type="GO" id="GO:1900745">
    <property type="term" value="P:positive regulation of p38MAPK cascade"/>
    <property type="evidence" value="ECO:0007669"/>
    <property type="project" value="Ensembl"/>
</dbReference>
<dbReference type="GO" id="GO:0046777">
    <property type="term" value="P:protein autophosphorylation"/>
    <property type="evidence" value="ECO:0000314"/>
    <property type="project" value="MGI"/>
</dbReference>
<dbReference type="CDD" id="cd06405">
    <property type="entry name" value="PB1_Mekk2_3"/>
    <property type="match status" value="1"/>
</dbReference>
<dbReference type="CDD" id="cd06625">
    <property type="entry name" value="STKc_MEKK3_like"/>
    <property type="match status" value="1"/>
</dbReference>
<dbReference type="FunFam" id="1.10.510.10:FF:000071">
    <property type="entry name" value="Mitogen-activated protein kinase kinase kinase 3 isoform 2"/>
    <property type="match status" value="1"/>
</dbReference>
<dbReference type="FunFam" id="3.10.20.90:FF:000026">
    <property type="entry name" value="Mitogen-activated protein kinase kinase kinase 3 isoform 2"/>
    <property type="match status" value="1"/>
</dbReference>
<dbReference type="Gene3D" id="3.10.20.90">
    <property type="entry name" value="Phosphatidylinositol 3-kinase Catalytic Subunit, Chain A, domain 1"/>
    <property type="match status" value="1"/>
</dbReference>
<dbReference type="Gene3D" id="1.10.510.10">
    <property type="entry name" value="Transferase(Phosphotransferase) domain 1"/>
    <property type="match status" value="1"/>
</dbReference>
<dbReference type="InterPro" id="IPR011009">
    <property type="entry name" value="Kinase-like_dom_sf"/>
</dbReference>
<dbReference type="InterPro" id="IPR053793">
    <property type="entry name" value="PB1-like"/>
</dbReference>
<dbReference type="InterPro" id="IPR000270">
    <property type="entry name" value="PB1_dom"/>
</dbReference>
<dbReference type="InterPro" id="IPR034879">
    <property type="entry name" value="PB1_MEKK2/3"/>
</dbReference>
<dbReference type="InterPro" id="IPR000719">
    <property type="entry name" value="Prot_kinase_dom"/>
</dbReference>
<dbReference type="PANTHER" id="PTHR11584:SF392">
    <property type="entry name" value="MITOGEN-ACTIVATED PROTEIN KINASE KINASE KINASE 3"/>
    <property type="match status" value="1"/>
</dbReference>
<dbReference type="PANTHER" id="PTHR11584">
    <property type="entry name" value="SERINE/THREONINE PROTEIN KINASE"/>
    <property type="match status" value="1"/>
</dbReference>
<dbReference type="Pfam" id="PF00564">
    <property type="entry name" value="PB1"/>
    <property type="match status" value="1"/>
</dbReference>
<dbReference type="Pfam" id="PF00069">
    <property type="entry name" value="Pkinase"/>
    <property type="match status" value="1"/>
</dbReference>
<dbReference type="SMART" id="SM00666">
    <property type="entry name" value="PB1"/>
    <property type="match status" value="1"/>
</dbReference>
<dbReference type="SMART" id="SM00220">
    <property type="entry name" value="S_TKc"/>
    <property type="match status" value="1"/>
</dbReference>
<dbReference type="SUPFAM" id="SSF54277">
    <property type="entry name" value="CAD &amp; PB1 domains"/>
    <property type="match status" value="1"/>
</dbReference>
<dbReference type="SUPFAM" id="SSF56112">
    <property type="entry name" value="Protein kinase-like (PK-like)"/>
    <property type="match status" value="1"/>
</dbReference>
<dbReference type="PROSITE" id="PS51745">
    <property type="entry name" value="PB1"/>
    <property type="match status" value="1"/>
</dbReference>
<dbReference type="PROSITE" id="PS50011">
    <property type="entry name" value="PROTEIN_KINASE_DOM"/>
    <property type="match status" value="1"/>
</dbReference>
<reference key="1">
    <citation type="journal article" date="1997" name="J. Biol. Chem.">
        <title>Direct activation of the stress-activated protein kinase (SAPK) and extracellular signal-regulated protein kinase (ERK) pathways by an inducible mitogen-activated protein kinase/ERK kinase kinase 3 (MEKK) derivative.</title>
        <authorList>
            <person name="Ellinger-Ziegelbauer H.C."/>
            <person name="Brown K."/>
            <person name="Kelly K."/>
            <person name="Siebenlist U."/>
        </authorList>
    </citation>
    <scope>NUCLEOTIDE SEQUENCE [MRNA] (ISOFORM 1)</scope>
    <scope>FUNCTION</scope>
</reference>
<reference key="2">
    <citation type="journal article" date="2004" name="Nat. Genet.">
        <title>Complete sequencing and characterization of 21,243 full-length human cDNAs.</title>
        <authorList>
            <person name="Ota T."/>
            <person name="Suzuki Y."/>
            <person name="Nishikawa T."/>
            <person name="Otsuki T."/>
            <person name="Sugiyama T."/>
            <person name="Irie R."/>
            <person name="Wakamatsu A."/>
            <person name="Hayashi K."/>
            <person name="Sato H."/>
            <person name="Nagai K."/>
            <person name="Kimura K."/>
            <person name="Makita H."/>
            <person name="Sekine M."/>
            <person name="Obayashi M."/>
            <person name="Nishi T."/>
            <person name="Shibahara T."/>
            <person name="Tanaka T."/>
            <person name="Ishii S."/>
            <person name="Yamamoto J."/>
            <person name="Saito K."/>
            <person name="Kawai Y."/>
            <person name="Isono Y."/>
            <person name="Nakamura Y."/>
            <person name="Nagahari K."/>
            <person name="Murakami K."/>
            <person name="Yasuda T."/>
            <person name="Iwayanagi T."/>
            <person name="Wagatsuma M."/>
            <person name="Shiratori A."/>
            <person name="Sudo H."/>
            <person name="Hosoiri T."/>
            <person name="Kaku Y."/>
            <person name="Kodaira H."/>
            <person name="Kondo H."/>
            <person name="Sugawara M."/>
            <person name="Takahashi M."/>
            <person name="Kanda K."/>
            <person name="Yokoi T."/>
            <person name="Furuya T."/>
            <person name="Kikkawa E."/>
            <person name="Omura Y."/>
            <person name="Abe K."/>
            <person name="Kamihara K."/>
            <person name="Katsuta N."/>
            <person name="Sato K."/>
            <person name="Tanikawa M."/>
            <person name="Yamazaki M."/>
            <person name="Ninomiya K."/>
            <person name="Ishibashi T."/>
            <person name="Yamashita H."/>
            <person name="Murakawa K."/>
            <person name="Fujimori K."/>
            <person name="Tanai H."/>
            <person name="Kimata M."/>
            <person name="Watanabe M."/>
            <person name="Hiraoka S."/>
            <person name="Chiba Y."/>
            <person name="Ishida S."/>
            <person name="Ono Y."/>
            <person name="Takiguchi S."/>
            <person name="Watanabe S."/>
            <person name="Yosida M."/>
            <person name="Hotuta T."/>
            <person name="Kusano J."/>
            <person name="Kanehori K."/>
            <person name="Takahashi-Fujii A."/>
            <person name="Hara H."/>
            <person name="Tanase T.-O."/>
            <person name="Nomura Y."/>
            <person name="Togiya S."/>
            <person name="Komai F."/>
            <person name="Hara R."/>
            <person name="Takeuchi K."/>
            <person name="Arita M."/>
            <person name="Imose N."/>
            <person name="Musashino K."/>
            <person name="Yuuki H."/>
            <person name="Oshima A."/>
            <person name="Sasaki N."/>
            <person name="Aotsuka S."/>
            <person name="Yoshikawa Y."/>
            <person name="Matsunawa H."/>
            <person name="Ichihara T."/>
            <person name="Shiohata N."/>
            <person name="Sano S."/>
            <person name="Moriya S."/>
            <person name="Momiyama H."/>
            <person name="Satoh N."/>
            <person name="Takami S."/>
            <person name="Terashima Y."/>
            <person name="Suzuki O."/>
            <person name="Nakagawa S."/>
            <person name="Senoh A."/>
            <person name="Mizoguchi H."/>
            <person name="Goto Y."/>
            <person name="Shimizu F."/>
            <person name="Wakebe H."/>
            <person name="Hishigaki H."/>
            <person name="Watanabe T."/>
            <person name="Sugiyama A."/>
            <person name="Takemoto M."/>
            <person name="Kawakami B."/>
            <person name="Yamazaki M."/>
            <person name="Watanabe K."/>
            <person name="Kumagai A."/>
            <person name="Itakura S."/>
            <person name="Fukuzumi Y."/>
            <person name="Fujimori Y."/>
            <person name="Komiyama M."/>
            <person name="Tashiro H."/>
            <person name="Tanigami A."/>
            <person name="Fujiwara T."/>
            <person name="Ono T."/>
            <person name="Yamada K."/>
            <person name="Fujii Y."/>
            <person name="Ozaki K."/>
            <person name="Hirao M."/>
            <person name="Ohmori Y."/>
            <person name="Kawabata A."/>
            <person name="Hikiji T."/>
            <person name="Kobatake N."/>
            <person name="Inagaki H."/>
            <person name="Ikema Y."/>
            <person name="Okamoto S."/>
            <person name="Okitani R."/>
            <person name="Kawakami T."/>
            <person name="Noguchi S."/>
            <person name="Itoh T."/>
            <person name="Shigeta K."/>
            <person name="Senba T."/>
            <person name="Matsumura K."/>
            <person name="Nakajima Y."/>
            <person name="Mizuno T."/>
            <person name="Morinaga M."/>
            <person name="Sasaki M."/>
            <person name="Togashi T."/>
            <person name="Oyama M."/>
            <person name="Hata H."/>
            <person name="Watanabe M."/>
            <person name="Komatsu T."/>
            <person name="Mizushima-Sugano J."/>
            <person name="Satoh T."/>
            <person name="Shirai Y."/>
            <person name="Takahashi Y."/>
            <person name="Nakagawa K."/>
            <person name="Okumura K."/>
            <person name="Nagase T."/>
            <person name="Nomura N."/>
            <person name="Kikuchi H."/>
            <person name="Masuho Y."/>
            <person name="Yamashita R."/>
            <person name="Nakai K."/>
            <person name="Yada T."/>
            <person name="Nakamura Y."/>
            <person name="Ohara O."/>
            <person name="Isogai T."/>
            <person name="Sugano S."/>
        </authorList>
    </citation>
    <scope>NUCLEOTIDE SEQUENCE [LARGE SCALE MRNA] (ISOFORM 1)</scope>
    <source>
        <tissue>Placenta</tissue>
    </source>
</reference>
<reference key="3">
    <citation type="journal article" date="2007" name="BMC Genomics">
        <title>The full-ORF clone resource of the German cDNA consortium.</title>
        <authorList>
            <person name="Bechtel S."/>
            <person name="Rosenfelder H."/>
            <person name="Duda A."/>
            <person name="Schmidt C.P."/>
            <person name="Ernst U."/>
            <person name="Wellenreuther R."/>
            <person name="Mehrle A."/>
            <person name="Schuster C."/>
            <person name="Bahr A."/>
            <person name="Bloecker H."/>
            <person name="Heubner D."/>
            <person name="Hoerlein A."/>
            <person name="Michel G."/>
            <person name="Wedler H."/>
            <person name="Koehrer K."/>
            <person name="Ottenwaelder B."/>
            <person name="Poustka A."/>
            <person name="Wiemann S."/>
            <person name="Schupp I."/>
        </authorList>
    </citation>
    <scope>NUCLEOTIDE SEQUENCE [LARGE SCALE MRNA] (ISOFORM 2)</scope>
    <source>
        <tissue>Melanoma</tissue>
    </source>
</reference>
<reference key="4">
    <citation type="journal article" date="2006" name="Nature">
        <title>DNA sequence of human chromosome 17 and analysis of rearrangement in the human lineage.</title>
        <authorList>
            <person name="Zody M.C."/>
            <person name="Garber M."/>
            <person name="Adams D.J."/>
            <person name="Sharpe T."/>
            <person name="Harrow J."/>
            <person name="Lupski J.R."/>
            <person name="Nicholson C."/>
            <person name="Searle S.M."/>
            <person name="Wilming L."/>
            <person name="Young S.K."/>
            <person name="Abouelleil A."/>
            <person name="Allen N.R."/>
            <person name="Bi W."/>
            <person name="Bloom T."/>
            <person name="Borowsky M.L."/>
            <person name="Bugalter B.E."/>
            <person name="Butler J."/>
            <person name="Chang J.L."/>
            <person name="Chen C.-K."/>
            <person name="Cook A."/>
            <person name="Corum B."/>
            <person name="Cuomo C.A."/>
            <person name="de Jong P.J."/>
            <person name="DeCaprio D."/>
            <person name="Dewar K."/>
            <person name="FitzGerald M."/>
            <person name="Gilbert J."/>
            <person name="Gibson R."/>
            <person name="Gnerre S."/>
            <person name="Goldstein S."/>
            <person name="Grafham D.V."/>
            <person name="Grocock R."/>
            <person name="Hafez N."/>
            <person name="Hagopian D.S."/>
            <person name="Hart E."/>
            <person name="Norman C.H."/>
            <person name="Humphray S."/>
            <person name="Jaffe D.B."/>
            <person name="Jones M."/>
            <person name="Kamal M."/>
            <person name="Khodiyar V.K."/>
            <person name="LaButti K."/>
            <person name="Laird G."/>
            <person name="Lehoczky J."/>
            <person name="Liu X."/>
            <person name="Lokyitsang T."/>
            <person name="Loveland J."/>
            <person name="Lui A."/>
            <person name="Macdonald P."/>
            <person name="Major J.E."/>
            <person name="Matthews L."/>
            <person name="Mauceli E."/>
            <person name="McCarroll S.A."/>
            <person name="Mihalev A.H."/>
            <person name="Mudge J."/>
            <person name="Nguyen C."/>
            <person name="Nicol R."/>
            <person name="O'Leary S.B."/>
            <person name="Osoegawa K."/>
            <person name="Schwartz D.C."/>
            <person name="Shaw-Smith C."/>
            <person name="Stankiewicz P."/>
            <person name="Steward C."/>
            <person name="Swarbreck D."/>
            <person name="Venkataraman V."/>
            <person name="Whittaker C.A."/>
            <person name="Yang X."/>
            <person name="Zimmer A.R."/>
            <person name="Bradley A."/>
            <person name="Hubbard T."/>
            <person name="Birren B.W."/>
            <person name="Rogers J."/>
            <person name="Lander E.S."/>
            <person name="Nusbaum C."/>
        </authorList>
    </citation>
    <scope>NUCLEOTIDE SEQUENCE [LARGE SCALE GENOMIC DNA]</scope>
</reference>
<reference key="5">
    <citation type="submission" date="2005-09" db="EMBL/GenBank/DDBJ databases">
        <authorList>
            <person name="Mural R.J."/>
            <person name="Istrail S."/>
            <person name="Sutton G.G."/>
            <person name="Florea L."/>
            <person name="Halpern A.L."/>
            <person name="Mobarry C.M."/>
            <person name="Lippert R."/>
            <person name="Walenz B."/>
            <person name="Shatkay H."/>
            <person name="Dew I."/>
            <person name="Miller J.R."/>
            <person name="Flanigan M.J."/>
            <person name="Edwards N.J."/>
            <person name="Bolanos R."/>
            <person name="Fasulo D."/>
            <person name="Halldorsson B.V."/>
            <person name="Hannenhalli S."/>
            <person name="Turner R."/>
            <person name="Yooseph S."/>
            <person name="Lu F."/>
            <person name="Nusskern D.R."/>
            <person name="Shue B.C."/>
            <person name="Zheng X.H."/>
            <person name="Zhong F."/>
            <person name="Delcher A.L."/>
            <person name="Huson D.H."/>
            <person name="Kravitz S.A."/>
            <person name="Mouchard L."/>
            <person name="Reinert K."/>
            <person name="Remington K.A."/>
            <person name="Clark A.G."/>
            <person name="Waterman M.S."/>
            <person name="Eichler E.E."/>
            <person name="Adams M.D."/>
            <person name="Hunkapiller M.W."/>
            <person name="Myers E.W."/>
            <person name="Venter J.C."/>
        </authorList>
    </citation>
    <scope>NUCLEOTIDE SEQUENCE [LARGE SCALE GENOMIC DNA]</scope>
</reference>
<reference key="6">
    <citation type="journal article" date="2004" name="Genome Res.">
        <title>The status, quality, and expansion of the NIH full-length cDNA project: the Mammalian Gene Collection (MGC).</title>
        <authorList>
            <consortium name="The MGC Project Team"/>
        </authorList>
    </citation>
    <scope>NUCLEOTIDE SEQUENCE [LARGE SCALE MRNA] (ISOFORM 1)</scope>
    <source>
        <tissue>Brain</tissue>
        <tissue>PNS</tissue>
    </source>
</reference>
<reference key="7">
    <citation type="journal article" date="2003" name="J. Biochem.">
        <title>Inhibition of mitogen-activated kinase kinase kinase 3 activity through phosphorylation by the serum- and glucocorticoid-induced kinase 1.</title>
        <authorList>
            <person name="Chun J."/>
            <person name="Kwon T."/>
            <person name="Kim D.J."/>
            <person name="Park I."/>
            <person name="Chung G."/>
            <person name="Lee E.J."/>
            <person name="Hong S.K."/>
            <person name="Chang S.I."/>
            <person name="Kim H.Y."/>
            <person name="Kang S.S."/>
        </authorList>
    </citation>
    <scope>PHOSPHORYLATION AT SER-166 AND SER-337 BY SGK1</scope>
</reference>
<reference key="8">
    <citation type="journal article" date="2003" name="J. Biol. Chem.">
        <title>PB1 domains of MEKK2 and MEKK3 interact with the MEK5 PB1 domain for activation of the ERK5 pathway.</title>
        <authorList>
            <person name="Nakamura K."/>
            <person name="Johnson G.L."/>
        </authorList>
    </citation>
    <scope>FUNCTION</scope>
    <scope>INTERACTION WITH MAP2K5</scope>
</reference>
<reference key="9">
    <citation type="journal article" date="2004" name="Nat. Immunol.">
        <title>Differential regulation of interleukin 1 receptor and Toll-like receptor signaling by MEKK3.</title>
        <authorList>
            <person name="Huang Q."/>
            <person name="Yang J."/>
            <person name="Lin Y."/>
            <person name="Walker C."/>
            <person name="Cheng J."/>
            <person name="Liu Z.G."/>
            <person name="Su B."/>
        </authorList>
    </citation>
    <scope>FUNCTION</scope>
    <scope>INTERACTION WITH TRAF6</scope>
</reference>
<reference key="10">
    <citation type="journal article" date="2004" name="Nat. Cell Biol.">
        <title>A physical and functional map of the human TNF-alpha/NF-kappa B signal transduction pathway.</title>
        <authorList>
            <person name="Bouwmeester T."/>
            <person name="Bauch A."/>
            <person name="Ruffner H."/>
            <person name="Angrand P.-O."/>
            <person name="Bergamini G."/>
            <person name="Croughton K."/>
            <person name="Cruciat C."/>
            <person name="Eberhard D."/>
            <person name="Gagneur J."/>
            <person name="Ghidelli S."/>
            <person name="Hopf C."/>
            <person name="Huhse B."/>
            <person name="Mangano R."/>
            <person name="Michon A.-M."/>
            <person name="Schirle M."/>
            <person name="Schlegl J."/>
            <person name="Schwab M."/>
            <person name="Stein M.A."/>
            <person name="Bauer A."/>
            <person name="Casari G."/>
            <person name="Drewes G."/>
            <person name="Gavin A.-C."/>
            <person name="Jackson D.B."/>
            <person name="Joberty G."/>
            <person name="Neubauer G."/>
            <person name="Rick J."/>
            <person name="Kuster B."/>
            <person name="Superti-Furga G."/>
        </authorList>
    </citation>
    <scope>FUNCTION</scope>
    <scope>INTERACTION WITH TRAF7</scope>
</reference>
<reference key="11">
    <citation type="journal article" date="2008" name="Mol. Cell">
        <title>Kinase-selective enrichment enables quantitative phosphoproteomics of the kinome across the cell cycle.</title>
        <authorList>
            <person name="Daub H."/>
            <person name="Olsen J.V."/>
            <person name="Bairlein M."/>
            <person name="Gnad F."/>
            <person name="Oppermann F.S."/>
            <person name="Korner R."/>
            <person name="Greff Z."/>
            <person name="Keri G."/>
            <person name="Stemmann O."/>
            <person name="Mann M."/>
        </authorList>
    </citation>
    <scope>PHOSPHORYLATION [LARGE SCALE ANALYSIS] AT SER-250; SER-337 AND SER-340</scope>
    <scope>IDENTIFICATION BY MASS SPECTROMETRY [LARGE SCALE ANALYSIS]</scope>
    <source>
        <tissue>Cervix carcinoma</tissue>
    </source>
</reference>
<reference key="12">
    <citation type="journal article" date="2009" name="Mol. Cell. Proteomics">
        <title>Large-scale proteomics analysis of the human kinome.</title>
        <authorList>
            <person name="Oppermann F.S."/>
            <person name="Gnad F."/>
            <person name="Olsen J.V."/>
            <person name="Hornberger R."/>
            <person name="Greff Z."/>
            <person name="Keri G."/>
            <person name="Mann M."/>
            <person name="Daub H."/>
        </authorList>
    </citation>
    <scope>PHOSPHORYLATION [LARGE SCALE ANALYSIS] AT SER-250; SER-337 AND SER-340</scope>
    <scope>IDENTIFICATION BY MASS SPECTROMETRY [LARGE SCALE ANALYSIS]</scope>
</reference>
<reference key="13">
    <citation type="journal article" date="2009" name="Sci. Signal.">
        <title>Quantitative phosphoproteomic analysis of T cell receptor signaling reveals system-wide modulation of protein-protein interactions.</title>
        <authorList>
            <person name="Mayya V."/>
            <person name="Lundgren D.H."/>
            <person name="Hwang S.-I."/>
            <person name="Rezaul K."/>
            <person name="Wu L."/>
            <person name="Eng J.K."/>
            <person name="Rodionov V."/>
            <person name="Han D.K."/>
        </authorList>
    </citation>
    <scope>PHOSPHORYLATION [LARGE SCALE ANALYSIS] AT SER-337 AND SER-340</scope>
    <scope>IDENTIFICATION BY MASS SPECTROMETRY [LARGE SCALE ANALYSIS]</scope>
    <source>
        <tissue>Leukemic T-cell</tissue>
    </source>
</reference>
<reference key="14">
    <citation type="journal article" date="2013" name="J. Proteome Res.">
        <title>Toward a comprehensive characterization of a human cancer cell phosphoproteome.</title>
        <authorList>
            <person name="Zhou H."/>
            <person name="Di Palma S."/>
            <person name="Preisinger C."/>
            <person name="Peng M."/>
            <person name="Polat A.N."/>
            <person name="Heck A.J."/>
            <person name="Mohammed S."/>
        </authorList>
    </citation>
    <scope>PHOSPHORYLATION [LARGE SCALE ANALYSIS] AT SER-166; SER-250; SER-312; SER-337 AND SER-340</scope>
    <scope>IDENTIFICATION BY MASS SPECTROMETRY [LARGE SCALE ANALYSIS]</scope>
    <source>
        <tissue>Cervix carcinoma</tissue>
        <tissue>Erythroleukemia</tissue>
    </source>
</reference>
<reference key="15">
    <citation type="journal article" date="2021" name="Am. J. Hum. Genet.">
        <title>Somatic MAP3K3 mutation defines a subclass of cerebral cavernous malformation.</title>
        <authorList>
            <person name="Weng J."/>
            <person name="Yang Y."/>
            <person name="Song D."/>
            <person name="Huo R."/>
            <person name="Li H."/>
            <person name="Chen Y."/>
            <person name="Nam Y."/>
            <person name="Zhou Q."/>
            <person name="Jiao Y."/>
            <person name="Fu W."/>
            <person name="Yan Z."/>
            <person name="Wang J."/>
            <person name="Xu H."/>
            <person name="Di L."/>
            <person name="Li J."/>
            <person name="Wang S."/>
            <person name="Zhao J."/>
            <person name="Wang J."/>
            <person name="Cao Y."/>
        </authorList>
    </citation>
    <scope>VARIANT CCM5 MET-441</scope>
    <scope>CHARACTERIZATION OF VARIANT CCM5 MET-441</scope>
    <scope>INVOLVEMENT IN CCM5</scope>
    <scope>FUNCTION</scope>
</reference>
<reference key="16">
    <citation type="journal article" date="2007" name="Nature">
        <title>Patterns of somatic mutation in human cancer genomes.</title>
        <authorList>
            <person name="Greenman C."/>
            <person name="Stephens P."/>
            <person name="Smith R."/>
            <person name="Dalgliesh G.L."/>
            <person name="Hunter C."/>
            <person name="Bignell G."/>
            <person name="Davies H."/>
            <person name="Teague J."/>
            <person name="Butler A."/>
            <person name="Stevens C."/>
            <person name="Edkins S."/>
            <person name="O'Meara S."/>
            <person name="Vastrik I."/>
            <person name="Schmidt E.E."/>
            <person name="Avis T."/>
            <person name="Barthorpe S."/>
            <person name="Bhamra G."/>
            <person name="Buck G."/>
            <person name="Choudhury B."/>
            <person name="Clements J."/>
            <person name="Cole J."/>
            <person name="Dicks E."/>
            <person name="Forbes S."/>
            <person name="Gray K."/>
            <person name="Halliday K."/>
            <person name="Harrison R."/>
            <person name="Hills K."/>
            <person name="Hinton J."/>
            <person name="Jenkinson A."/>
            <person name="Jones D."/>
            <person name="Menzies A."/>
            <person name="Mironenko T."/>
            <person name="Perry J."/>
            <person name="Raine K."/>
            <person name="Richardson D."/>
            <person name="Shepherd R."/>
            <person name="Small A."/>
            <person name="Tofts C."/>
            <person name="Varian J."/>
            <person name="Webb T."/>
            <person name="West S."/>
            <person name="Widaa S."/>
            <person name="Yates A."/>
            <person name="Cahill D.P."/>
            <person name="Louis D.N."/>
            <person name="Goldstraw P."/>
            <person name="Nicholson A.G."/>
            <person name="Brasseur F."/>
            <person name="Looijenga L."/>
            <person name="Weber B.L."/>
            <person name="Chiew Y.-E."/>
            <person name="DeFazio A."/>
            <person name="Greaves M.F."/>
            <person name="Green A.R."/>
            <person name="Campbell P."/>
            <person name="Birney E."/>
            <person name="Easton D.F."/>
            <person name="Chenevix-Trench G."/>
            <person name="Tan M.-H."/>
            <person name="Khoo S.K."/>
            <person name="Teh B.T."/>
            <person name="Yuen S.T."/>
            <person name="Leung S.Y."/>
            <person name="Wooster R."/>
            <person name="Futreal P.A."/>
            <person name="Stratton M.R."/>
        </authorList>
    </citation>
    <scope>VARIANT [LARGE SCALE ANALYSIS] MET-281</scope>
</reference>
<reference key="17">
    <citation type="journal article" date="2021" name="Brain">
        <title>Somatic MAP3K3 and PIK3CA mutations in sporadic cerebral and spinal cord cavernous malformations.</title>
        <authorList>
            <person name="Hong T."/>
            <person name="Xiao X."/>
            <person name="Ren J."/>
            <person name="Cui B."/>
            <person name="Zong Y."/>
            <person name="Zou J."/>
            <person name="Kou Z."/>
            <person name="Jiang N."/>
            <person name="Meng G."/>
            <person name="Zeng G."/>
            <person name="Shan Y."/>
            <person name="Wu H."/>
            <person name="Chen Z."/>
            <person name="Liang J."/>
            <person name="Xiao X."/>
            <person name="Tang J."/>
            <person name="Wei Y."/>
            <person name="Ye M."/>
            <person name="Sun L."/>
            <person name="Li G."/>
            <person name="Hu P."/>
            <person name="Hui R."/>
            <person name="Zhang H."/>
            <person name="Wang Y."/>
        </authorList>
    </citation>
    <scope>VARIANT CCM5 MET-441</scope>
    <scope>CHARACTERIZATION CCM5 MET-441</scope>
    <scope>INVOLVEMENT IN CCM5</scope>
    <scope>FUNCTION</scope>
</reference>
<accession>Q99759</accession>
<accession>B2RCW2</accession>
<accession>D3DU15</accession>
<accession>Q5BKZ6</accession>
<accession>Q8N3I9</accession>
<feature type="chain" id="PRO_0000086245" description="Mitogen-activated protein kinase kinase kinase 3">
    <location>
        <begin position="1"/>
        <end position="626"/>
    </location>
</feature>
<feature type="domain" description="PB1" evidence="4">
    <location>
        <begin position="44"/>
        <end position="123"/>
    </location>
</feature>
<feature type="domain" description="Protein kinase" evidence="3">
    <location>
        <begin position="362"/>
        <end position="622"/>
    </location>
</feature>
<feature type="region of interest" description="Disordered" evidence="5">
    <location>
        <begin position="146"/>
        <end position="184"/>
    </location>
</feature>
<feature type="region of interest" description="Disordered" evidence="5">
    <location>
        <begin position="218"/>
        <end position="262"/>
    </location>
</feature>
<feature type="compositionally biased region" description="Polar residues" evidence="5">
    <location>
        <begin position="146"/>
        <end position="155"/>
    </location>
</feature>
<feature type="compositionally biased region" description="Polar residues" evidence="5">
    <location>
        <begin position="165"/>
        <end position="174"/>
    </location>
</feature>
<feature type="compositionally biased region" description="Polar residues" evidence="5">
    <location>
        <begin position="219"/>
        <end position="232"/>
    </location>
</feature>
<feature type="active site" description="Proton acceptor" evidence="3">
    <location>
        <position position="489"/>
    </location>
</feature>
<feature type="binding site" evidence="3">
    <location>
        <begin position="368"/>
        <end position="376"/>
    </location>
    <ligand>
        <name>ATP</name>
        <dbReference type="ChEBI" id="CHEBI:30616"/>
    </ligand>
</feature>
<feature type="binding site" evidence="3">
    <location>
        <position position="391"/>
    </location>
    <ligand>
        <name>ATP</name>
        <dbReference type="ChEBI" id="CHEBI:30616"/>
    </ligand>
</feature>
<feature type="modified residue" description="Phosphoserine" evidence="2">
    <location>
        <position position="147"/>
    </location>
</feature>
<feature type="modified residue" description="Phosphoserine; by SGK1" evidence="6 19">
    <location>
        <position position="166"/>
    </location>
</feature>
<feature type="modified residue" description="Phosphoserine" evidence="16 17 19">
    <location>
        <position position="250"/>
    </location>
</feature>
<feature type="modified residue" description="Phosphoserine" evidence="19">
    <location>
        <position position="312"/>
    </location>
</feature>
<feature type="modified residue" description="Phosphoserine; by SGK1" evidence="6 16 17 18 19">
    <location>
        <position position="337"/>
    </location>
</feature>
<feature type="modified residue" description="Phosphoserine" evidence="16 17 18 19">
    <location>
        <position position="340"/>
    </location>
</feature>
<feature type="splice variant" id="VSP_035967" description="In isoform 2." evidence="14">
    <original>Q</original>
    <variation>QKKHNSSSSALLNSPTVTTSSCAGASEKKKFL</variation>
    <location>
        <position position="42"/>
    </location>
</feature>
<feature type="sequence variant" id="VAR_040685" description="In dbSNP:rs36109904." evidence="10">
    <original>V</original>
    <variation>M</variation>
    <location>
        <position position="281"/>
    </location>
</feature>
<feature type="sequence variant" id="VAR_037275" description="In dbSNP:rs34042309.">
    <original>A</original>
    <variation>G</variation>
    <location>
        <position position="325"/>
    </location>
</feature>
<feature type="sequence variant" id="VAR_037276" description="In dbSNP:rs9910858.">
    <original>A</original>
    <variation>G</variation>
    <location>
        <position position="435"/>
    </location>
</feature>
<feature type="sequence variant" id="VAR_090244" description="In CCM5; somatic variant; results in MAPK cascade activation; dbSNP:rs2143631386." evidence="11 12">
    <original>I</original>
    <variation>M</variation>
    <location>
        <position position="441"/>
    </location>
</feature>
<feature type="sequence conflict" description="In Ref. 1; AAB41729." evidence="15" ref="1">
    <original>G</original>
    <variation>E</variation>
    <location>
        <position position="135"/>
    </location>
</feature>
<feature type="helix" evidence="23">
    <location>
        <begin position="3"/>
        <end position="18"/>
    </location>
</feature>
<feature type="turn" evidence="20">
    <location>
        <begin position="28"/>
        <end position="30"/>
    </location>
</feature>
<feature type="strand" evidence="20">
    <location>
        <begin position="45"/>
        <end position="51"/>
    </location>
</feature>
<feature type="strand" evidence="20">
    <location>
        <begin position="54"/>
        <end position="60"/>
    </location>
</feature>
<feature type="helix" evidence="20">
    <location>
        <begin position="66"/>
        <end position="77"/>
    </location>
</feature>
<feature type="strand" evidence="20">
    <location>
        <begin position="82"/>
        <end position="86"/>
    </location>
</feature>
<feature type="helix" evidence="22">
    <location>
        <begin position="88"/>
        <end position="90"/>
    </location>
</feature>
<feature type="strand" evidence="20">
    <location>
        <begin position="91"/>
        <end position="93"/>
    </location>
</feature>
<feature type="helix" evidence="20">
    <location>
        <begin position="97"/>
        <end position="109"/>
    </location>
</feature>
<feature type="turn" evidence="21">
    <location>
        <begin position="111"/>
        <end position="114"/>
    </location>
</feature>
<feature type="strand" evidence="20">
    <location>
        <begin position="115"/>
        <end position="121"/>
    </location>
</feature>
<evidence type="ECO:0000250" key="1"/>
<evidence type="ECO:0000250" key="2">
    <source>
        <dbReference type="UniProtKB" id="Q61084"/>
    </source>
</evidence>
<evidence type="ECO:0000255" key="3">
    <source>
        <dbReference type="PROSITE-ProRule" id="PRU00159"/>
    </source>
</evidence>
<evidence type="ECO:0000255" key="4">
    <source>
        <dbReference type="PROSITE-ProRule" id="PRU01081"/>
    </source>
</evidence>
<evidence type="ECO:0000256" key="5">
    <source>
        <dbReference type="SAM" id="MobiDB-lite"/>
    </source>
</evidence>
<evidence type="ECO:0000269" key="6">
    <source>
    </source>
</evidence>
<evidence type="ECO:0000269" key="7">
    <source>
    </source>
</evidence>
<evidence type="ECO:0000269" key="8">
    <source>
    </source>
</evidence>
<evidence type="ECO:0000269" key="9">
    <source>
    </source>
</evidence>
<evidence type="ECO:0000269" key="10">
    <source>
    </source>
</evidence>
<evidence type="ECO:0000269" key="11">
    <source>
    </source>
</evidence>
<evidence type="ECO:0000269" key="12">
    <source>
    </source>
</evidence>
<evidence type="ECO:0000269" key="13">
    <source>
    </source>
</evidence>
<evidence type="ECO:0000303" key="14">
    <source>
    </source>
</evidence>
<evidence type="ECO:0000305" key="15"/>
<evidence type="ECO:0007744" key="16">
    <source>
    </source>
</evidence>
<evidence type="ECO:0007744" key="17">
    <source>
    </source>
</evidence>
<evidence type="ECO:0007744" key="18">
    <source>
    </source>
</evidence>
<evidence type="ECO:0007744" key="19">
    <source>
    </source>
</evidence>
<evidence type="ECO:0007829" key="20">
    <source>
        <dbReference type="PDB" id="2C60"/>
    </source>
</evidence>
<evidence type="ECO:0007829" key="21">
    <source>
        <dbReference type="PDB" id="2JRH"/>
    </source>
</evidence>
<evidence type="ECO:0007829" key="22">
    <source>
        <dbReference type="PDB" id="4Y5O"/>
    </source>
</evidence>
<evidence type="ECO:0007829" key="23">
    <source>
        <dbReference type="PDB" id="4YL6"/>
    </source>
</evidence>
<keyword id="KW-0002">3D-structure</keyword>
<keyword id="KW-0025">Alternative splicing</keyword>
<keyword id="KW-0067">ATP-binding</keyword>
<keyword id="KW-0225">Disease variant</keyword>
<keyword id="KW-0418">Kinase</keyword>
<keyword id="KW-0460">Magnesium</keyword>
<keyword id="KW-0479">Metal-binding</keyword>
<keyword id="KW-0547">Nucleotide-binding</keyword>
<keyword id="KW-0597">Phosphoprotein</keyword>
<keyword id="KW-1267">Proteomics identification</keyword>
<keyword id="KW-1185">Reference proteome</keyword>
<keyword id="KW-0723">Serine/threonine-protein kinase</keyword>
<keyword id="KW-0808">Transferase</keyword>
<comment type="function">
    <text evidence="7 8 9 11 12 13">Component of a protein kinase signal transduction cascade. Mediates activation of the NF-kappa-B, AP1 and DDIT3 transcriptional regulators.</text>
</comment>
<comment type="catalytic activity">
    <reaction>
        <text>L-seryl-[protein] + ATP = O-phospho-L-seryl-[protein] + ADP + H(+)</text>
        <dbReference type="Rhea" id="RHEA:17989"/>
        <dbReference type="Rhea" id="RHEA-COMP:9863"/>
        <dbReference type="Rhea" id="RHEA-COMP:11604"/>
        <dbReference type="ChEBI" id="CHEBI:15378"/>
        <dbReference type="ChEBI" id="CHEBI:29999"/>
        <dbReference type="ChEBI" id="CHEBI:30616"/>
        <dbReference type="ChEBI" id="CHEBI:83421"/>
        <dbReference type="ChEBI" id="CHEBI:456216"/>
        <dbReference type="EC" id="2.7.11.25"/>
    </reaction>
</comment>
<comment type="catalytic activity">
    <reaction>
        <text>L-threonyl-[protein] + ATP = O-phospho-L-threonyl-[protein] + ADP + H(+)</text>
        <dbReference type="Rhea" id="RHEA:46608"/>
        <dbReference type="Rhea" id="RHEA-COMP:11060"/>
        <dbReference type="Rhea" id="RHEA-COMP:11605"/>
        <dbReference type="ChEBI" id="CHEBI:15378"/>
        <dbReference type="ChEBI" id="CHEBI:30013"/>
        <dbReference type="ChEBI" id="CHEBI:30616"/>
        <dbReference type="ChEBI" id="CHEBI:61977"/>
        <dbReference type="ChEBI" id="CHEBI:456216"/>
        <dbReference type="EC" id="2.7.11.25"/>
    </reaction>
</comment>
<comment type="cofactor">
    <cofactor>
        <name>Mg(2+)</name>
        <dbReference type="ChEBI" id="CHEBI:18420"/>
    </cofactor>
</comment>
<comment type="activity regulation">
    <text evidence="1">Activated by phosphorylation on Thr-530.</text>
</comment>
<comment type="subunit">
    <text evidence="7 8 9">Binds both upstream activators and downstream substrates in multimolecular complexes. Part of a complex with MAP2K3, RAC1 and CCM2. Interacts with MAP2K5 and SPAG9.</text>
</comment>
<comment type="interaction">
    <interactant intactId="EBI-307281">
        <id>Q99759</id>
    </interactant>
    <interactant intactId="EBI-16157769">
        <id>Q9BSQ5-1</id>
        <label>CCM2</label>
    </interactant>
    <organismsDiffer>false</organismsDiffer>
    <experiments>6</experiments>
</comment>
<comment type="interaction">
    <interactant intactId="EBI-307281">
        <id>Q99759</id>
    </interactant>
    <interactant intactId="EBI-307294">
        <id>Q13163</id>
        <label>MAP2K5</label>
    </interactant>
    <organismsDiffer>false</organismsDiffer>
    <experiments>5</experiments>
</comment>
<comment type="interaction">
    <interactant intactId="EBI-307281">
        <id>Q99759</id>
    </interactant>
    <interactant intactId="EBI-307556">
        <id>Q6Q0C0</id>
        <label>TRAF7</label>
    </interactant>
    <organismsDiffer>false</organismsDiffer>
    <experiments>3</experiments>
</comment>
<comment type="interaction">
    <interactant intactId="EBI-307281">
        <id>Q99759</id>
    </interactant>
    <interactant intactId="EBI-359815">
        <id>P31946</id>
        <label>YWHAB</label>
    </interactant>
    <organismsDiffer>false</organismsDiffer>
    <experiments>5</experiments>
</comment>
<comment type="interaction">
    <interactant intactId="EBI-307281">
        <id>Q99759</id>
    </interactant>
    <interactant intactId="EBI-356498">
        <id>P62258</id>
        <label>YWHAE</label>
    </interactant>
    <organismsDiffer>false</organismsDiffer>
    <experiments>6</experiments>
</comment>
<comment type="interaction">
    <interactant intactId="EBI-307281">
        <id>Q99759</id>
    </interactant>
    <interactant intactId="EBI-359832">
        <id>P61981</id>
        <label>YWHAG</label>
    </interactant>
    <organismsDiffer>false</organismsDiffer>
    <experiments>6</experiments>
</comment>
<comment type="interaction">
    <interactant intactId="EBI-307281">
        <id>Q99759</id>
    </interactant>
    <interactant intactId="EBI-306940">
        <id>Q04917</id>
        <label>YWHAH</label>
    </interactant>
    <organismsDiffer>false</organismsDiffer>
    <experiments>6</experiments>
</comment>
<comment type="interaction">
    <interactant intactId="EBI-307281">
        <id>Q99759</id>
    </interactant>
    <interactant intactId="EBI-359854">
        <id>P27348</id>
        <label>YWHAQ</label>
    </interactant>
    <organismsDiffer>false</organismsDiffer>
    <experiments>5</experiments>
</comment>
<comment type="interaction">
    <interactant intactId="EBI-307281">
        <id>Q99759</id>
    </interactant>
    <interactant intactId="EBI-347088">
        <id>P63104</id>
        <label>YWHAZ</label>
    </interactant>
    <organismsDiffer>false</organismsDiffer>
    <experiments>6</experiments>
</comment>
<comment type="alternative products">
    <event type="alternative splicing"/>
    <isoform>
        <id>Q99759-1</id>
        <name>1</name>
        <sequence type="displayed"/>
    </isoform>
    <isoform>
        <id>Q99759-2</id>
        <name>2</name>
        <sequence type="described" ref="VSP_035967"/>
    </isoform>
</comment>
<comment type="PTM">
    <text evidence="6">Phosphorylation at Ser-166 and Ser-337 by SGK1 inhibits its activity.</text>
</comment>
<comment type="disease" evidence="11 12">
    <disease id="DI-06979">
        <name>Cerebral cavernous malformations 5</name>
        <acronym>CCM5</acronym>
        <description>A form of cerebral cavernous malformations, a congenital vascular anomaly of the central nervous system that can result in hemorrhagic stroke, seizures, recurrent headaches, and focal neurologic deficits. The lesions are characterized by grossly enlarged blood vessels consisting of a single layer of endothelium and without any intervening neural tissue, ranging in diameter from a few millimeters to several centimeters.</description>
        <dbReference type="MIM" id="621032"/>
    </disease>
    <text>The disease is caused by variants affecting the gene represented in this entry.</text>
</comment>
<comment type="similarity">
    <text evidence="15">Belongs to the protein kinase superfamily. STE Ser/Thr protein kinase family. MAP kinase kinase kinase subfamily.</text>
</comment>
<proteinExistence type="evidence at protein level"/>
<name>M3K3_HUMAN</name>
<gene>
    <name type="primary">MAP3K3</name>
    <name type="synonym">MAPKKK3</name>
    <name type="synonym">MEKK3</name>
</gene>
<protein>
    <recommendedName>
        <fullName>Mitogen-activated protein kinase kinase kinase 3</fullName>
        <ecNumber>2.7.11.25</ecNumber>
    </recommendedName>
    <alternativeName>
        <fullName>MAPK/ERK kinase kinase 3</fullName>
        <shortName>MEK kinase 3</shortName>
        <shortName>MEKK 3</shortName>
    </alternativeName>
</protein>
<sequence length="626" mass="70898">MDEQEALNSIMNDLVALQMNRRHRMPGYETMKNKDTGHSNRQSDVRIKFEHNGERRIIAFSRPVKYEDVEHKVTTVFGQPLDLHYMNNELSILLKNQDDLDKAIDILDRSSSMKSLRILLLSQDRNHNSSSPHSGVSRQVRIKASQSAGDINTIYQPPEPRSRHLSVSSQNPGRSSPPPGYVPERQQHIARQGSYTSINSEGEFIPETSEQCMLDPLSSAENSLSGSCQSLDRSADSPSFRKSRMSRAQSFPDNRQEYSDRETQLYDKGVKGGTYPRRYHVSVHHKDYSDGRRTFPRIRRHQGNLFTLVPSSRSLSTNGENMGLAVQYLDPRGRLRSADSENALSVQERNVPTKSPSAPINWRRGKLLGQGAFGRVYLCYDVDTGRELASKQVQFDPDSPETSKEVSALECEIQLLKNLQHERIVQYYGCLRDRAEKTLTIFMEYMPGGSVKDQLKAYGALTESVTRKYTRQILEGMSYLHSNMIVHRDIKGANILRDSAGNVKLGDFGASKRLQTICMSGTGMRSVTGTPYWMSPEVISGEGYGRKADVWSLGCTVVEMLTEKPPWAEYEAMAAIFKIATQPTNPQLPSHISEHGRDFLRRIFVEARQRPSAEELLTHHFAQLMY</sequence>
<organism>
    <name type="scientific">Homo sapiens</name>
    <name type="common">Human</name>
    <dbReference type="NCBI Taxonomy" id="9606"/>
    <lineage>
        <taxon>Eukaryota</taxon>
        <taxon>Metazoa</taxon>
        <taxon>Chordata</taxon>
        <taxon>Craniata</taxon>
        <taxon>Vertebrata</taxon>
        <taxon>Euteleostomi</taxon>
        <taxon>Mammalia</taxon>
        <taxon>Eutheria</taxon>
        <taxon>Euarchontoglires</taxon>
        <taxon>Primates</taxon>
        <taxon>Haplorrhini</taxon>
        <taxon>Catarrhini</taxon>
        <taxon>Hominidae</taxon>
        <taxon>Homo</taxon>
    </lineage>
</organism>